<organism>
    <name type="scientific">Arabidopsis thaliana</name>
    <name type="common">Mouse-ear cress</name>
    <dbReference type="NCBI Taxonomy" id="3702"/>
    <lineage>
        <taxon>Eukaryota</taxon>
        <taxon>Viridiplantae</taxon>
        <taxon>Streptophyta</taxon>
        <taxon>Embryophyta</taxon>
        <taxon>Tracheophyta</taxon>
        <taxon>Spermatophyta</taxon>
        <taxon>Magnoliopsida</taxon>
        <taxon>eudicotyledons</taxon>
        <taxon>Gunneridae</taxon>
        <taxon>Pentapetalae</taxon>
        <taxon>rosids</taxon>
        <taxon>malvids</taxon>
        <taxon>Brassicales</taxon>
        <taxon>Brassicaceae</taxon>
        <taxon>Camelineae</taxon>
        <taxon>Arabidopsis</taxon>
    </lineage>
</organism>
<proteinExistence type="inferred from homology"/>
<reference key="1">
    <citation type="journal article" date="1999" name="Nature">
        <title>Sequence and analysis of chromosome 4 of the plant Arabidopsis thaliana.</title>
        <authorList>
            <person name="Mayer K.F.X."/>
            <person name="Schueller C."/>
            <person name="Wambutt R."/>
            <person name="Murphy G."/>
            <person name="Volckaert G."/>
            <person name="Pohl T."/>
            <person name="Duesterhoeft A."/>
            <person name="Stiekema W."/>
            <person name="Entian K.-D."/>
            <person name="Terryn N."/>
            <person name="Harris B."/>
            <person name="Ansorge W."/>
            <person name="Brandt P."/>
            <person name="Grivell L.A."/>
            <person name="Rieger M."/>
            <person name="Weichselgartner M."/>
            <person name="de Simone V."/>
            <person name="Obermaier B."/>
            <person name="Mache R."/>
            <person name="Mueller M."/>
            <person name="Kreis M."/>
            <person name="Delseny M."/>
            <person name="Puigdomenech P."/>
            <person name="Watson M."/>
            <person name="Schmidtheini T."/>
            <person name="Reichert B."/>
            <person name="Portetelle D."/>
            <person name="Perez-Alonso M."/>
            <person name="Boutry M."/>
            <person name="Bancroft I."/>
            <person name="Vos P."/>
            <person name="Hoheisel J."/>
            <person name="Zimmermann W."/>
            <person name="Wedler H."/>
            <person name="Ridley P."/>
            <person name="Langham S.-A."/>
            <person name="McCullagh B."/>
            <person name="Bilham L."/>
            <person name="Robben J."/>
            <person name="van der Schueren J."/>
            <person name="Grymonprez B."/>
            <person name="Chuang Y.-J."/>
            <person name="Vandenbussche F."/>
            <person name="Braeken M."/>
            <person name="Weltjens I."/>
            <person name="Voet M."/>
            <person name="Bastiaens I."/>
            <person name="Aert R."/>
            <person name="Defoor E."/>
            <person name="Weitzenegger T."/>
            <person name="Bothe G."/>
            <person name="Ramsperger U."/>
            <person name="Hilbert H."/>
            <person name="Braun M."/>
            <person name="Holzer E."/>
            <person name="Brandt A."/>
            <person name="Peters S."/>
            <person name="van Staveren M."/>
            <person name="Dirkse W."/>
            <person name="Mooijman P."/>
            <person name="Klein Lankhorst R."/>
            <person name="Rose M."/>
            <person name="Hauf J."/>
            <person name="Koetter P."/>
            <person name="Berneiser S."/>
            <person name="Hempel S."/>
            <person name="Feldpausch M."/>
            <person name="Lamberth S."/>
            <person name="Van den Daele H."/>
            <person name="De Keyser A."/>
            <person name="Buysshaert C."/>
            <person name="Gielen J."/>
            <person name="Villarroel R."/>
            <person name="De Clercq R."/>
            <person name="van Montagu M."/>
            <person name="Rogers J."/>
            <person name="Cronin A."/>
            <person name="Quail M.A."/>
            <person name="Bray-Allen S."/>
            <person name="Clark L."/>
            <person name="Doggett J."/>
            <person name="Hall S."/>
            <person name="Kay M."/>
            <person name="Lennard N."/>
            <person name="McLay K."/>
            <person name="Mayes R."/>
            <person name="Pettett A."/>
            <person name="Rajandream M.A."/>
            <person name="Lyne M."/>
            <person name="Benes V."/>
            <person name="Rechmann S."/>
            <person name="Borkova D."/>
            <person name="Bloecker H."/>
            <person name="Scharfe M."/>
            <person name="Grimm M."/>
            <person name="Loehnert T.-H."/>
            <person name="Dose S."/>
            <person name="de Haan M."/>
            <person name="Maarse A.C."/>
            <person name="Schaefer M."/>
            <person name="Mueller-Auer S."/>
            <person name="Gabel C."/>
            <person name="Fuchs M."/>
            <person name="Fartmann B."/>
            <person name="Granderath K."/>
            <person name="Dauner D."/>
            <person name="Herzl A."/>
            <person name="Neumann S."/>
            <person name="Argiriou A."/>
            <person name="Vitale D."/>
            <person name="Liguori R."/>
            <person name="Piravandi E."/>
            <person name="Massenet O."/>
            <person name="Quigley F."/>
            <person name="Clabauld G."/>
            <person name="Muendlein A."/>
            <person name="Felber R."/>
            <person name="Schnabl S."/>
            <person name="Hiller R."/>
            <person name="Schmidt W."/>
            <person name="Lecharny A."/>
            <person name="Aubourg S."/>
            <person name="Chefdor F."/>
            <person name="Cooke R."/>
            <person name="Berger C."/>
            <person name="Monfort A."/>
            <person name="Casacuberta E."/>
            <person name="Gibbons T."/>
            <person name="Weber N."/>
            <person name="Vandenbol M."/>
            <person name="Bargues M."/>
            <person name="Terol J."/>
            <person name="Torres A."/>
            <person name="Perez-Perez A."/>
            <person name="Purnelle B."/>
            <person name="Bent E."/>
            <person name="Johnson S."/>
            <person name="Tacon D."/>
            <person name="Jesse T."/>
            <person name="Heijnen L."/>
            <person name="Schwarz S."/>
            <person name="Scholler P."/>
            <person name="Heber S."/>
            <person name="Francs P."/>
            <person name="Bielke C."/>
            <person name="Frishman D."/>
            <person name="Haase D."/>
            <person name="Lemcke K."/>
            <person name="Mewes H.-W."/>
            <person name="Stocker S."/>
            <person name="Zaccaria P."/>
            <person name="Bevan M."/>
            <person name="Wilson R.K."/>
            <person name="de la Bastide M."/>
            <person name="Habermann K."/>
            <person name="Parnell L."/>
            <person name="Dedhia N."/>
            <person name="Gnoj L."/>
            <person name="Schutz K."/>
            <person name="Huang E."/>
            <person name="Spiegel L."/>
            <person name="Sekhon M."/>
            <person name="Murray J."/>
            <person name="Sheet P."/>
            <person name="Cordes M."/>
            <person name="Abu-Threideh J."/>
            <person name="Stoneking T."/>
            <person name="Kalicki J."/>
            <person name="Graves T."/>
            <person name="Harmon G."/>
            <person name="Edwards J."/>
            <person name="Latreille P."/>
            <person name="Courtney L."/>
            <person name="Cloud J."/>
            <person name="Abbott A."/>
            <person name="Scott K."/>
            <person name="Johnson D."/>
            <person name="Minx P."/>
            <person name="Bentley D."/>
            <person name="Fulton B."/>
            <person name="Miller N."/>
            <person name="Greco T."/>
            <person name="Kemp K."/>
            <person name="Kramer J."/>
            <person name="Fulton L."/>
            <person name="Mardis E."/>
            <person name="Dante M."/>
            <person name="Pepin K."/>
            <person name="Hillier L.W."/>
            <person name="Nelson J."/>
            <person name="Spieth J."/>
            <person name="Ryan E."/>
            <person name="Andrews S."/>
            <person name="Geisel C."/>
            <person name="Layman D."/>
            <person name="Du H."/>
            <person name="Ali J."/>
            <person name="Berghoff A."/>
            <person name="Jones K."/>
            <person name="Drone K."/>
            <person name="Cotton M."/>
            <person name="Joshu C."/>
            <person name="Antonoiu B."/>
            <person name="Zidanic M."/>
            <person name="Strong C."/>
            <person name="Sun H."/>
            <person name="Lamar B."/>
            <person name="Yordan C."/>
            <person name="Ma P."/>
            <person name="Zhong J."/>
            <person name="Preston R."/>
            <person name="Vil D."/>
            <person name="Shekher M."/>
            <person name="Matero A."/>
            <person name="Shah R."/>
            <person name="Swaby I.K."/>
            <person name="O'Shaughnessy A."/>
            <person name="Rodriguez M."/>
            <person name="Hoffman J."/>
            <person name="Till S."/>
            <person name="Granat S."/>
            <person name="Shohdy N."/>
            <person name="Hasegawa A."/>
            <person name="Hameed A."/>
            <person name="Lodhi M."/>
            <person name="Johnson A."/>
            <person name="Chen E."/>
            <person name="Marra M.A."/>
            <person name="Martienssen R."/>
            <person name="McCombie W.R."/>
        </authorList>
    </citation>
    <scope>NUCLEOTIDE SEQUENCE [LARGE SCALE GENOMIC DNA]</scope>
    <source>
        <strain>cv. Columbia</strain>
    </source>
</reference>
<reference key="2">
    <citation type="journal article" date="2017" name="Plant J.">
        <title>Araport11: a complete reannotation of the Arabidopsis thaliana reference genome.</title>
        <authorList>
            <person name="Cheng C.Y."/>
            <person name="Krishnakumar V."/>
            <person name="Chan A.P."/>
            <person name="Thibaud-Nissen F."/>
            <person name="Schobel S."/>
            <person name="Town C.D."/>
        </authorList>
    </citation>
    <scope>GENOME REANNOTATION</scope>
    <source>
        <strain>cv. Columbia</strain>
    </source>
</reference>
<reference key="3">
    <citation type="submission" date="2009-03" db="EMBL/GenBank/DDBJ databases">
        <title>ORF cloning and analysis of Arabidopsis transcription factor genes.</title>
        <authorList>
            <person name="Fujita M."/>
            <person name="Mizukado S."/>
            <person name="Seki M."/>
            <person name="Shinozaki K."/>
            <person name="Mitsuda N."/>
            <person name="Takiguchi Y."/>
            <person name="Takagi M."/>
        </authorList>
    </citation>
    <scope>NUCLEOTIDE SEQUENCE [LARGE SCALE GENOMIC DNA]</scope>
</reference>
<reference key="4">
    <citation type="journal article" date="2008" name="Trends Plant Sci.">
        <title>The plant B3 superfamily.</title>
        <authorList>
            <person name="Swaminathan K."/>
            <person name="Peterson K."/>
            <person name="Jack T."/>
        </authorList>
    </citation>
    <scope>GENE FAMILY</scope>
</reference>
<feature type="chain" id="PRO_0000375148" description="Putative B3 domain-containing protein At4g03170">
    <location>
        <begin position="1"/>
        <end position="250"/>
    </location>
</feature>
<feature type="DNA-binding region" description="TF-B3">
    <location>
        <begin position="137"/>
        <end position="245"/>
    </location>
</feature>
<feature type="region of interest" description="Disordered" evidence="2">
    <location>
        <begin position="1"/>
        <end position="90"/>
    </location>
</feature>
<feature type="compositionally biased region" description="Polar residues" evidence="2">
    <location>
        <begin position="1"/>
        <end position="12"/>
    </location>
</feature>
<feature type="compositionally biased region" description="Acidic residues" evidence="2">
    <location>
        <begin position="34"/>
        <end position="56"/>
    </location>
</feature>
<feature type="compositionally biased region" description="Basic and acidic residues" evidence="2">
    <location>
        <begin position="72"/>
        <end position="84"/>
    </location>
</feature>
<protein>
    <recommendedName>
        <fullName>Putative B3 domain-containing protein At4g03170</fullName>
    </recommendedName>
</protein>
<name>Y4317_ARATH</name>
<keyword id="KW-0238">DNA-binding</keyword>
<keyword id="KW-0539">Nucleus</keyword>
<keyword id="KW-1185">Reference proteome</keyword>
<keyword id="KW-0804">Transcription</keyword>
<keyword id="KW-0805">Transcription regulation</keyword>
<comment type="subcellular location">
    <subcellularLocation>
        <location evidence="1">Nucleus</location>
    </subcellularLocation>
</comment>
<dbReference type="EMBL" id="AC005275">
    <property type="protein sequence ID" value="AAD14445.1"/>
    <property type="molecule type" value="Genomic_DNA"/>
</dbReference>
<dbReference type="EMBL" id="AL161496">
    <property type="protein sequence ID" value="CAB77802.1"/>
    <property type="molecule type" value="Genomic_DNA"/>
</dbReference>
<dbReference type="EMBL" id="CP002687">
    <property type="protein sequence ID" value="AEE82284.1"/>
    <property type="molecule type" value="Genomic_DNA"/>
</dbReference>
<dbReference type="EMBL" id="AB493674">
    <property type="protein sequence ID" value="BAH30512.1"/>
    <property type="molecule type" value="Genomic_DNA"/>
</dbReference>
<dbReference type="PIR" id="C85040">
    <property type="entry name" value="C85040"/>
</dbReference>
<dbReference type="RefSeq" id="NP_192226.1">
    <property type="nucleotide sequence ID" value="NM_116553.1"/>
</dbReference>
<dbReference type="SMR" id="Q9ZR14"/>
<dbReference type="BioGRID" id="13341">
    <property type="interactions" value="2"/>
</dbReference>
<dbReference type="FunCoup" id="Q9ZR14">
    <property type="interactions" value="14"/>
</dbReference>
<dbReference type="IntAct" id="Q9ZR14">
    <property type="interactions" value="2"/>
</dbReference>
<dbReference type="STRING" id="3702.Q9ZR14"/>
<dbReference type="PaxDb" id="3702-AT4G03170.1"/>
<dbReference type="EnsemblPlants" id="AT4G03170.1">
    <property type="protein sequence ID" value="AT4G03170.1"/>
    <property type="gene ID" value="AT4G03170"/>
</dbReference>
<dbReference type="GeneID" id="828050"/>
<dbReference type="Gramene" id="AT4G03170.1">
    <property type="protein sequence ID" value="AT4G03170.1"/>
    <property type="gene ID" value="AT4G03170"/>
</dbReference>
<dbReference type="KEGG" id="ath:AT4G03170"/>
<dbReference type="Araport" id="AT4G03170"/>
<dbReference type="TAIR" id="AT4G03170"/>
<dbReference type="eggNOG" id="ENOG502S91R">
    <property type="taxonomic scope" value="Eukaryota"/>
</dbReference>
<dbReference type="HOGENOM" id="CLU_100761_0_0_1"/>
<dbReference type="InParanoid" id="Q9ZR14"/>
<dbReference type="OMA" id="CEKCKAK"/>
<dbReference type="PhylomeDB" id="Q9ZR14"/>
<dbReference type="PRO" id="PR:Q9ZR14"/>
<dbReference type="Proteomes" id="UP000006548">
    <property type="component" value="Chromosome 4"/>
</dbReference>
<dbReference type="ExpressionAtlas" id="Q9ZR14">
    <property type="expression patterns" value="baseline and differential"/>
</dbReference>
<dbReference type="GO" id="GO:0005634">
    <property type="term" value="C:nucleus"/>
    <property type="evidence" value="ECO:0007669"/>
    <property type="project" value="UniProtKB-SubCell"/>
</dbReference>
<dbReference type="GO" id="GO:0003677">
    <property type="term" value="F:DNA binding"/>
    <property type="evidence" value="ECO:0007669"/>
    <property type="project" value="UniProtKB-KW"/>
</dbReference>
<dbReference type="CDD" id="cd10017">
    <property type="entry name" value="B3_DNA"/>
    <property type="match status" value="1"/>
</dbReference>
<dbReference type="Gene3D" id="2.40.330.10">
    <property type="entry name" value="DNA-binding pseudobarrel domain"/>
    <property type="match status" value="1"/>
</dbReference>
<dbReference type="InterPro" id="IPR005508">
    <property type="entry name" value="At2g31720-like"/>
</dbReference>
<dbReference type="InterPro" id="IPR003340">
    <property type="entry name" value="B3_DNA-bd"/>
</dbReference>
<dbReference type="InterPro" id="IPR015300">
    <property type="entry name" value="DNA-bd_pseudobarrel_sf"/>
</dbReference>
<dbReference type="PANTHER" id="PTHR31541">
    <property type="entry name" value="B3 DOMAIN PLANT PROTEIN-RELATED"/>
    <property type="match status" value="1"/>
</dbReference>
<dbReference type="PANTHER" id="PTHR31541:SF28">
    <property type="entry name" value="TF-B3 DOMAIN-CONTAINING PROTEIN"/>
    <property type="match status" value="1"/>
</dbReference>
<dbReference type="Pfam" id="PF02362">
    <property type="entry name" value="B3"/>
    <property type="match status" value="1"/>
</dbReference>
<dbReference type="SMART" id="SM01019">
    <property type="entry name" value="B3"/>
    <property type="match status" value="1"/>
</dbReference>
<dbReference type="SUPFAM" id="SSF101936">
    <property type="entry name" value="DNA-binding pseudobarrel domain"/>
    <property type="match status" value="1"/>
</dbReference>
<gene>
    <name type="ordered locus">At4g03170</name>
    <name type="ORF">F4C21.9</name>
</gene>
<sequence>MANSTGKPTSSTQEDEEATSATEILAQLMQDIIDREEDIDDEDDIDDEVIDDEDYEVASLPLLQESQANQKQSREREEETEKNQPKRFKKQNMMKINIHDFSEETLRLIEVWYEAELDPQDIFGDNEVTRLFSRPIKKQLMSSDVDKDQCMLMLSKEQVKEKMLPFLEDSENPVKGIDVSVYGPDGKVQQMEFKMWNGDKTPVLTSGWKQFVEDYGLSMTCDFVTVWMFRHIKTRKLCFAIHYVKFSLRD</sequence>
<accession>Q9ZR14</accession>
<evidence type="ECO:0000250" key="1"/>
<evidence type="ECO:0000256" key="2">
    <source>
        <dbReference type="SAM" id="MobiDB-lite"/>
    </source>
</evidence>